<accession>P00985</accession>
<sequence>RPDFCELPAETGLCKAYIRSFHYNLAAQQCLQFIYGGCGGNANRFKTIDECRRTCVG</sequence>
<proteinExistence type="evidence at protein level"/>
<organism>
    <name type="scientific">Hemachatus haemachatus</name>
    <name type="common">Rinkhals</name>
    <name type="synonym">Sepedon haemachatus</name>
    <dbReference type="NCBI Taxonomy" id="8626"/>
    <lineage>
        <taxon>Eukaryota</taxon>
        <taxon>Metazoa</taxon>
        <taxon>Chordata</taxon>
        <taxon>Craniata</taxon>
        <taxon>Vertebrata</taxon>
        <taxon>Euteleostomi</taxon>
        <taxon>Lepidosauria</taxon>
        <taxon>Squamata</taxon>
        <taxon>Bifurcata</taxon>
        <taxon>Unidentata</taxon>
        <taxon>Episquamata</taxon>
        <taxon>Toxicofera</taxon>
        <taxon>Serpentes</taxon>
        <taxon>Colubroidea</taxon>
        <taxon>Elapidae</taxon>
        <taxon>Elapinae</taxon>
        <taxon>Hemachatus</taxon>
    </lineage>
</organism>
<evidence type="ECO:0000250" key="1"/>
<evidence type="ECO:0000255" key="2">
    <source>
        <dbReference type="PROSITE-ProRule" id="PRU00031"/>
    </source>
</evidence>
<evidence type="ECO:0000269" key="3">
    <source>
    </source>
</evidence>
<evidence type="ECO:0000305" key="4"/>
<dbReference type="PIR" id="A01216">
    <property type="entry name" value="TIRIV2"/>
</dbReference>
<dbReference type="SMR" id="P00985"/>
<dbReference type="MEROPS" id="I02.055"/>
<dbReference type="GO" id="GO:0005615">
    <property type="term" value="C:extracellular space"/>
    <property type="evidence" value="ECO:0007669"/>
    <property type="project" value="TreeGrafter"/>
</dbReference>
<dbReference type="GO" id="GO:0004867">
    <property type="term" value="F:serine-type endopeptidase inhibitor activity"/>
    <property type="evidence" value="ECO:0007669"/>
    <property type="project" value="UniProtKB-KW"/>
</dbReference>
<dbReference type="CDD" id="cd22594">
    <property type="entry name" value="Kunitz_textilinin-like"/>
    <property type="match status" value="1"/>
</dbReference>
<dbReference type="FunFam" id="4.10.410.10:FF:000021">
    <property type="entry name" value="Serine protease inhibitor, putative"/>
    <property type="match status" value="1"/>
</dbReference>
<dbReference type="Gene3D" id="4.10.410.10">
    <property type="entry name" value="Pancreatic trypsin inhibitor Kunitz domain"/>
    <property type="match status" value="1"/>
</dbReference>
<dbReference type="InterPro" id="IPR002223">
    <property type="entry name" value="Kunitz_BPTI"/>
</dbReference>
<dbReference type="InterPro" id="IPR036880">
    <property type="entry name" value="Kunitz_BPTI_sf"/>
</dbReference>
<dbReference type="InterPro" id="IPR020901">
    <property type="entry name" value="Prtase_inh_Kunz-CS"/>
</dbReference>
<dbReference type="InterPro" id="IPR050098">
    <property type="entry name" value="TFPI/VKTCI-like"/>
</dbReference>
<dbReference type="PANTHER" id="PTHR10083:SF374">
    <property type="entry name" value="BPTI_KUNITZ INHIBITOR DOMAIN-CONTAINING PROTEIN"/>
    <property type="match status" value="1"/>
</dbReference>
<dbReference type="PANTHER" id="PTHR10083">
    <property type="entry name" value="KUNITZ-TYPE PROTEASE INHIBITOR-RELATED"/>
    <property type="match status" value="1"/>
</dbReference>
<dbReference type="Pfam" id="PF00014">
    <property type="entry name" value="Kunitz_BPTI"/>
    <property type="match status" value="1"/>
</dbReference>
<dbReference type="PRINTS" id="PR00759">
    <property type="entry name" value="BASICPTASE"/>
</dbReference>
<dbReference type="SMART" id="SM00131">
    <property type="entry name" value="KU"/>
    <property type="match status" value="1"/>
</dbReference>
<dbReference type="SUPFAM" id="SSF57362">
    <property type="entry name" value="BPTI-like"/>
    <property type="match status" value="1"/>
</dbReference>
<dbReference type="PROSITE" id="PS00280">
    <property type="entry name" value="BPTI_KUNITZ_1"/>
    <property type="match status" value="1"/>
</dbReference>
<dbReference type="PROSITE" id="PS50279">
    <property type="entry name" value="BPTI_KUNITZ_2"/>
    <property type="match status" value="1"/>
</dbReference>
<comment type="function">
    <text evidence="3">Serine protease inhibitor.</text>
</comment>
<comment type="subcellular location">
    <subcellularLocation>
        <location>Secreted</location>
    </subcellularLocation>
</comment>
<comment type="tissue specificity">
    <text>Expressed by the venom gland.</text>
</comment>
<comment type="similarity">
    <text evidence="4">Belongs to the venom Kunitz-type family.</text>
</comment>
<keyword id="KW-0903">Direct protein sequencing</keyword>
<keyword id="KW-1015">Disulfide bond</keyword>
<keyword id="KW-0646">Protease inhibitor</keyword>
<keyword id="KW-0964">Secreted</keyword>
<keyword id="KW-0722">Serine protease inhibitor</keyword>
<protein>
    <recommendedName>
        <fullName>Kunitz-type serine protease inhibitor 2</fullName>
    </recommendedName>
    <alternativeName>
        <fullName>Venom basic protease inhibitor 2</fullName>
    </alternativeName>
</protein>
<feature type="chain" id="PRO_0000155438" description="Kunitz-type serine protease inhibitor 2">
    <location>
        <begin position="1"/>
        <end position="57"/>
    </location>
</feature>
<feature type="domain" description="BPTI/Kunitz inhibitor" evidence="2">
    <location>
        <begin position="5"/>
        <end position="55"/>
    </location>
</feature>
<feature type="site" description="Reactive bond for trypsin" evidence="1">
    <location>
        <begin position="15"/>
        <end position="16"/>
    </location>
</feature>
<feature type="disulfide bond" evidence="2">
    <location>
        <begin position="5"/>
        <end position="55"/>
    </location>
</feature>
<feature type="disulfide bond" evidence="2">
    <location>
        <begin position="14"/>
        <end position="38"/>
    </location>
</feature>
<feature type="disulfide bond" evidence="2">
    <location>
        <begin position="30"/>
        <end position="51"/>
    </location>
</feature>
<reference key="1">
    <citation type="journal article" date="1976" name="J. Biochem.">
        <title>Snake venom proteinase inhibitors. III. Isolation of five polypeptide inhibitors from the venoms of Hemachatus haemachatus (Ringhal's corbra) and Naja nivea (Cape cobra) and the complete amino acid sequences of two of them.</title>
        <authorList>
            <person name="Hokama Y."/>
            <person name="Iwanaga S."/>
            <person name="Tatsuki T."/>
            <person name="Suzuki T."/>
        </authorList>
    </citation>
    <scope>PROTEIN SEQUENCE</scope>
    <scope>FUNCTION</scope>
</reference>
<name>VKT2_HEMHA</name>